<proteinExistence type="inferred from homology"/>
<name>YRDC_BACSU</name>
<feature type="chain" id="PRO_0000360064" description="Uncharacterized isochorismatase family protein YrdC">
    <location>
        <begin position="1"/>
        <end position="187"/>
    </location>
</feature>
<organism>
    <name type="scientific">Bacillus subtilis (strain 168)</name>
    <dbReference type="NCBI Taxonomy" id="224308"/>
    <lineage>
        <taxon>Bacteria</taxon>
        <taxon>Bacillati</taxon>
        <taxon>Bacillota</taxon>
        <taxon>Bacilli</taxon>
        <taxon>Bacillales</taxon>
        <taxon>Bacillaceae</taxon>
        <taxon>Bacillus</taxon>
    </lineage>
</organism>
<gene>
    <name type="primary">yrdC</name>
    <name type="ordered locus">BSU26760</name>
</gene>
<comment type="similarity">
    <text evidence="1">Belongs to the isochorismatase family.</text>
</comment>
<accession>O07081</accession>
<accession>Q796A2</accession>
<accession>Q799S4</accession>
<sequence>MEEKKALIIVDVQKAFDDKKWGERNNVKAEENISKILELWREKGWTVIYIQHTSDKPHSLFHPKNEGFAIKEIVKPMDEEVIITKTVNSSFIGTNLEEFLKLNEITTVVITGLTTPHCVSTTTRMSGNLGFDTYLISDATAAFGMRDQNDTYYDAATIHNISLATLHDEFATILTTDQLINDFIKTH</sequence>
<dbReference type="EC" id="3.-.-.-"/>
<dbReference type="EMBL" id="U93876">
    <property type="protein sequence ID" value="AAB80896.1"/>
    <property type="molecule type" value="Genomic_DNA"/>
</dbReference>
<dbReference type="EMBL" id="AL009126">
    <property type="protein sequence ID" value="CAB14617.1"/>
    <property type="molecule type" value="Genomic_DNA"/>
</dbReference>
<dbReference type="EMBL" id="Y11043">
    <property type="protein sequence ID" value="CAA71935.1"/>
    <property type="molecule type" value="Genomic_DNA"/>
</dbReference>
<dbReference type="PIR" id="A69973">
    <property type="entry name" value="A69973"/>
</dbReference>
<dbReference type="PIR" id="T44772">
    <property type="entry name" value="T44772"/>
</dbReference>
<dbReference type="RefSeq" id="NP_390553.1">
    <property type="nucleotide sequence ID" value="NC_000964.3"/>
</dbReference>
<dbReference type="RefSeq" id="WP_004398700.1">
    <property type="nucleotide sequence ID" value="NZ_OZ025638.1"/>
</dbReference>
<dbReference type="SMR" id="O07081"/>
<dbReference type="FunCoup" id="O07081">
    <property type="interactions" value="141"/>
</dbReference>
<dbReference type="STRING" id="224308.BSU26760"/>
<dbReference type="PaxDb" id="224308-BSU26760"/>
<dbReference type="DNASU" id="937618"/>
<dbReference type="EnsemblBacteria" id="CAB14617">
    <property type="protein sequence ID" value="CAB14617"/>
    <property type="gene ID" value="BSU_26760"/>
</dbReference>
<dbReference type="GeneID" id="937618"/>
<dbReference type="KEGG" id="bsu:BSU26760"/>
<dbReference type="PATRIC" id="fig|224308.179.peg.2907"/>
<dbReference type="eggNOG" id="COG1335">
    <property type="taxonomic scope" value="Bacteria"/>
</dbReference>
<dbReference type="InParanoid" id="O07081"/>
<dbReference type="OrthoDB" id="257098at2"/>
<dbReference type="PhylomeDB" id="O07081"/>
<dbReference type="BioCyc" id="BSUB:BSU26760-MONOMER"/>
<dbReference type="Proteomes" id="UP000001570">
    <property type="component" value="Chromosome"/>
</dbReference>
<dbReference type="GO" id="GO:0016787">
    <property type="term" value="F:hydrolase activity"/>
    <property type="evidence" value="ECO:0007669"/>
    <property type="project" value="UniProtKB-KW"/>
</dbReference>
<dbReference type="CDD" id="cd01014">
    <property type="entry name" value="nicotinamidase_related"/>
    <property type="match status" value="1"/>
</dbReference>
<dbReference type="Gene3D" id="3.40.50.850">
    <property type="entry name" value="Isochorismatase-like"/>
    <property type="match status" value="1"/>
</dbReference>
<dbReference type="InterPro" id="IPR000868">
    <property type="entry name" value="Isochorismatase-like_dom"/>
</dbReference>
<dbReference type="InterPro" id="IPR050272">
    <property type="entry name" value="Isochorismatase-like_hydrls"/>
</dbReference>
<dbReference type="InterPro" id="IPR036380">
    <property type="entry name" value="Isochorismatase-like_sf"/>
</dbReference>
<dbReference type="PANTHER" id="PTHR43540:SF1">
    <property type="entry name" value="ISOCHORISMATASE HYDROLASE"/>
    <property type="match status" value="1"/>
</dbReference>
<dbReference type="PANTHER" id="PTHR43540">
    <property type="entry name" value="PEROXYUREIDOACRYLATE/UREIDOACRYLATE AMIDOHYDROLASE-RELATED"/>
    <property type="match status" value="1"/>
</dbReference>
<dbReference type="Pfam" id="PF00857">
    <property type="entry name" value="Isochorismatase"/>
    <property type="match status" value="1"/>
</dbReference>
<dbReference type="SUPFAM" id="SSF52499">
    <property type="entry name" value="Isochorismatase-like hydrolases"/>
    <property type="match status" value="1"/>
</dbReference>
<protein>
    <recommendedName>
        <fullName>Uncharacterized isochorismatase family protein YrdC</fullName>
        <ecNumber>3.-.-.-</ecNumber>
    </recommendedName>
</protein>
<keyword id="KW-0378">Hydrolase</keyword>
<keyword id="KW-1185">Reference proteome</keyword>
<reference key="1">
    <citation type="journal article" date="1997" name="Microbiology">
        <title>Sequence of the Bacillus subtilis genome region in the vicinity of the lev operon reveals two new extracytoplasmic function RNA polymerase sigma factors SigV and SigZ.</title>
        <authorList>
            <person name="Sorokin A."/>
            <person name="Bolotin A."/>
            <person name="Purnelle B."/>
            <person name="Hilbert H."/>
            <person name="Lauber J."/>
            <person name="Duesterhoeft A."/>
            <person name="Ehrlich S.D."/>
        </authorList>
    </citation>
    <scope>NUCLEOTIDE SEQUENCE [GENOMIC DNA]</scope>
    <source>
        <strain>168</strain>
    </source>
</reference>
<reference key="2">
    <citation type="journal article" date="1997" name="Nature">
        <title>The complete genome sequence of the Gram-positive bacterium Bacillus subtilis.</title>
        <authorList>
            <person name="Kunst F."/>
            <person name="Ogasawara N."/>
            <person name="Moszer I."/>
            <person name="Albertini A.M."/>
            <person name="Alloni G."/>
            <person name="Azevedo V."/>
            <person name="Bertero M.G."/>
            <person name="Bessieres P."/>
            <person name="Bolotin A."/>
            <person name="Borchert S."/>
            <person name="Borriss R."/>
            <person name="Boursier L."/>
            <person name="Brans A."/>
            <person name="Braun M."/>
            <person name="Brignell S.C."/>
            <person name="Bron S."/>
            <person name="Brouillet S."/>
            <person name="Bruschi C.V."/>
            <person name="Caldwell B."/>
            <person name="Capuano V."/>
            <person name="Carter N.M."/>
            <person name="Choi S.-K."/>
            <person name="Codani J.-J."/>
            <person name="Connerton I.F."/>
            <person name="Cummings N.J."/>
            <person name="Daniel R.A."/>
            <person name="Denizot F."/>
            <person name="Devine K.M."/>
            <person name="Duesterhoeft A."/>
            <person name="Ehrlich S.D."/>
            <person name="Emmerson P.T."/>
            <person name="Entian K.-D."/>
            <person name="Errington J."/>
            <person name="Fabret C."/>
            <person name="Ferrari E."/>
            <person name="Foulger D."/>
            <person name="Fritz C."/>
            <person name="Fujita M."/>
            <person name="Fujita Y."/>
            <person name="Fuma S."/>
            <person name="Galizzi A."/>
            <person name="Galleron N."/>
            <person name="Ghim S.-Y."/>
            <person name="Glaser P."/>
            <person name="Goffeau A."/>
            <person name="Golightly E.J."/>
            <person name="Grandi G."/>
            <person name="Guiseppi G."/>
            <person name="Guy B.J."/>
            <person name="Haga K."/>
            <person name="Haiech J."/>
            <person name="Harwood C.R."/>
            <person name="Henaut A."/>
            <person name="Hilbert H."/>
            <person name="Holsappel S."/>
            <person name="Hosono S."/>
            <person name="Hullo M.-F."/>
            <person name="Itaya M."/>
            <person name="Jones L.-M."/>
            <person name="Joris B."/>
            <person name="Karamata D."/>
            <person name="Kasahara Y."/>
            <person name="Klaerr-Blanchard M."/>
            <person name="Klein C."/>
            <person name="Kobayashi Y."/>
            <person name="Koetter P."/>
            <person name="Koningstein G."/>
            <person name="Krogh S."/>
            <person name="Kumano M."/>
            <person name="Kurita K."/>
            <person name="Lapidus A."/>
            <person name="Lardinois S."/>
            <person name="Lauber J."/>
            <person name="Lazarevic V."/>
            <person name="Lee S.-M."/>
            <person name="Levine A."/>
            <person name="Liu H."/>
            <person name="Masuda S."/>
            <person name="Mauel C."/>
            <person name="Medigue C."/>
            <person name="Medina N."/>
            <person name="Mellado R.P."/>
            <person name="Mizuno M."/>
            <person name="Moestl D."/>
            <person name="Nakai S."/>
            <person name="Noback M."/>
            <person name="Noone D."/>
            <person name="O'Reilly M."/>
            <person name="Ogawa K."/>
            <person name="Ogiwara A."/>
            <person name="Oudega B."/>
            <person name="Park S.-H."/>
            <person name="Parro V."/>
            <person name="Pohl T.M."/>
            <person name="Portetelle D."/>
            <person name="Porwollik S."/>
            <person name="Prescott A.M."/>
            <person name="Presecan E."/>
            <person name="Pujic P."/>
            <person name="Purnelle B."/>
            <person name="Rapoport G."/>
            <person name="Rey M."/>
            <person name="Reynolds S."/>
            <person name="Rieger M."/>
            <person name="Rivolta C."/>
            <person name="Rocha E."/>
            <person name="Roche B."/>
            <person name="Rose M."/>
            <person name="Sadaie Y."/>
            <person name="Sato T."/>
            <person name="Scanlan E."/>
            <person name="Schleich S."/>
            <person name="Schroeter R."/>
            <person name="Scoffone F."/>
            <person name="Sekiguchi J."/>
            <person name="Sekowska A."/>
            <person name="Seror S.J."/>
            <person name="Serror P."/>
            <person name="Shin B.-S."/>
            <person name="Soldo B."/>
            <person name="Sorokin A."/>
            <person name="Tacconi E."/>
            <person name="Takagi T."/>
            <person name="Takahashi H."/>
            <person name="Takemaru K."/>
            <person name="Takeuchi M."/>
            <person name="Tamakoshi A."/>
            <person name="Tanaka T."/>
            <person name="Terpstra P."/>
            <person name="Tognoni A."/>
            <person name="Tosato V."/>
            <person name="Uchiyama S."/>
            <person name="Vandenbol M."/>
            <person name="Vannier F."/>
            <person name="Vassarotti A."/>
            <person name="Viari A."/>
            <person name="Wambutt R."/>
            <person name="Wedler E."/>
            <person name="Wedler H."/>
            <person name="Weitzenegger T."/>
            <person name="Winters P."/>
            <person name="Wipat A."/>
            <person name="Yamamoto H."/>
            <person name="Yamane K."/>
            <person name="Yasumoto K."/>
            <person name="Yata K."/>
            <person name="Yoshida K."/>
            <person name="Yoshikawa H.-F."/>
            <person name="Zumstein E."/>
            <person name="Yoshikawa H."/>
            <person name="Danchin A."/>
        </authorList>
    </citation>
    <scope>NUCLEOTIDE SEQUENCE [LARGE SCALE GENOMIC DNA]</scope>
    <source>
        <strain>168</strain>
    </source>
</reference>
<reference key="3">
    <citation type="journal article" date="1997" name="J. Bacteriol.">
        <title>An lrp-like gene of Bacillus subtilis involved in branched-chain amino acid transport.</title>
        <authorList>
            <person name="Belitsky B.R."/>
            <person name="Gustafsson M.C.U."/>
            <person name="Sonenshein A.L."/>
            <person name="von Wachenfeldt C."/>
        </authorList>
    </citation>
    <scope>NUCLEOTIDE SEQUENCE [GENOMIC DNA] OF 6-187</scope>
    <source>
        <strain>168 / BGSC1A1</strain>
    </source>
</reference>
<evidence type="ECO:0000305" key="1"/>